<dbReference type="EMBL" id="CP000730">
    <property type="protein sequence ID" value="ABX29368.1"/>
    <property type="molecule type" value="Genomic_DNA"/>
</dbReference>
<dbReference type="RefSeq" id="WP_000801007.1">
    <property type="nucleotide sequence ID" value="NC_010079.1"/>
</dbReference>
<dbReference type="SMR" id="A8Z400"/>
<dbReference type="KEGG" id="sax:USA300HOU_1358"/>
<dbReference type="HOGENOM" id="CLU_177534_1_0_9"/>
<dbReference type="BioCyc" id="SAUR451516-HMP:GTV5-1376-MONOMER"/>
<dbReference type="Gene3D" id="1.10.150.260">
    <property type="entry name" value="YozE SAM-like"/>
    <property type="match status" value="1"/>
</dbReference>
<dbReference type="HAMAP" id="MF_01538">
    <property type="entry name" value="UPF0346"/>
    <property type="match status" value="1"/>
</dbReference>
<dbReference type="InterPro" id="IPR010673">
    <property type="entry name" value="UPF0346"/>
</dbReference>
<dbReference type="InterPro" id="IPR023089">
    <property type="entry name" value="YozE_SAM-like"/>
</dbReference>
<dbReference type="InterPro" id="IPR036806">
    <property type="entry name" value="YozE_SAM-like_sf"/>
</dbReference>
<dbReference type="NCBIfam" id="NF010193">
    <property type="entry name" value="PRK13672.1"/>
    <property type="match status" value="1"/>
</dbReference>
<dbReference type="Pfam" id="PF06855">
    <property type="entry name" value="YozE_SAM_like"/>
    <property type="match status" value="1"/>
</dbReference>
<dbReference type="PIRSF" id="PIRSF037262">
    <property type="entry name" value="UCP037262"/>
    <property type="match status" value="1"/>
</dbReference>
<dbReference type="SUPFAM" id="SSF140652">
    <property type="entry name" value="YozE-like"/>
    <property type="match status" value="1"/>
</dbReference>
<name>Y1358_STAAT</name>
<evidence type="ECO:0000255" key="1">
    <source>
        <dbReference type="HAMAP-Rule" id="MF_01538"/>
    </source>
</evidence>
<reference key="1">
    <citation type="journal article" date="2007" name="BMC Microbiol.">
        <title>Subtle genetic changes enhance virulence of methicillin resistant and sensitive Staphylococcus aureus.</title>
        <authorList>
            <person name="Highlander S.K."/>
            <person name="Hulten K.G."/>
            <person name="Qin X."/>
            <person name="Jiang H."/>
            <person name="Yerrapragada S."/>
            <person name="Mason E.O. Jr."/>
            <person name="Shang Y."/>
            <person name="Williams T.M."/>
            <person name="Fortunov R.M."/>
            <person name="Liu Y."/>
            <person name="Igboeli O."/>
            <person name="Petrosino J."/>
            <person name="Tirumalai M."/>
            <person name="Uzman A."/>
            <person name="Fox G.E."/>
            <person name="Cardenas A.M."/>
            <person name="Muzny D.M."/>
            <person name="Hemphill L."/>
            <person name="Ding Y."/>
            <person name="Dugan S."/>
            <person name="Blyth P.R."/>
            <person name="Buhay C.J."/>
            <person name="Dinh H.H."/>
            <person name="Hawes A.C."/>
            <person name="Holder M."/>
            <person name="Kovar C.L."/>
            <person name="Lee S.L."/>
            <person name="Liu W."/>
            <person name="Nazareth L.V."/>
            <person name="Wang Q."/>
            <person name="Zhou J."/>
            <person name="Kaplan S.L."/>
            <person name="Weinstock G.M."/>
        </authorList>
    </citation>
    <scope>NUCLEOTIDE SEQUENCE [LARGE SCALE GENOMIC DNA]</scope>
    <source>
        <strain>USA300 / TCH1516</strain>
    </source>
</reference>
<comment type="similarity">
    <text evidence="1">Belongs to the UPF0346 family.</text>
</comment>
<sequence length="73" mass="8870">MKNYSFYQFVMTVRGRHDDKGRLAEEIFDDLAFPKHDDDFNILSDYIETHGDFTLPMSVFDDLYEEYTEWLKF</sequence>
<gene>
    <name type="ordered locus">USA300HOU_1358</name>
</gene>
<protein>
    <recommendedName>
        <fullName evidence="1">UPF0346 protein USA300HOU_1358</fullName>
    </recommendedName>
</protein>
<accession>A8Z400</accession>
<organism>
    <name type="scientific">Staphylococcus aureus (strain USA300 / TCH1516)</name>
    <dbReference type="NCBI Taxonomy" id="451516"/>
    <lineage>
        <taxon>Bacteria</taxon>
        <taxon>Bacillati</taxon>
        <taxon>Bacillota</taxon>
        <taxon>Bacilli</taxon>
        <taxon>Bacillales</taxon>
        <taxon>Staphylococcaceae</taxon>
        <taxon>Staphylococcus</taxon>
    </lineage>
</organism>
<feature type="chain" id="PRO_1000087618" description="UPF0346 protein USA300HOU_1358">
    <location>
        <begin position="1"/>
        <end position="73"/>
    </location>
</feature>
<proteinExistence type="inferred from homology"/>